<sequence length="676" mass="76771">MSSAYELVSNYQPAGDQPQAIKTLNEGLENGLAHQTLLGVTGSGKTFTLANVIAHSGRPTIIMAHNKTLAAQLYGEMKAFFPNNAVEYFVSYFDYYQPEAYVPTTDTFIEKDSSVNEHIEQMRLSATKALLERKDAIIIASVSAIYGLGDPKAYLSMILHLRRGDIINQRDMLRRLAELQYKRNDMAFERGTFRVRGEVLDIFPAESEHEAIRIEMFDDEVERISKFDPLTGSIITKDMPRCTIYPKTHYVTPREQVLDAIEKIKVDLAIRQKELLENNKLVEEQRITQRTQFDIEMMNELGFCSGIENYSRYLSGRPEGEAPPTLFDYLPQDGLLIIDESHITVSQIGAMYKGDRSRKENLVEYGFRLPSALDNRPLRFEEFEALAPQTIYVSATPGKYEIEKSDGEIAEQVVRPTGLLDPVIEVRPVATQVDDLLSEIRIRTKNNERVLVTTLTKRMAEDLTEYLDEHGVKVRYLHSDIDTVERVEIIRDLRLGEFDVLVGINLLREGLDMPEVSLVAILDADKEGFLRSERSLIQTIGRAARNLEGKAILYADKITGSMEKAIGETERRREKQQLHNETLGIVPQALKKDVADILELGDMTKNKRKVVAPKIKLSEVAEEGASYSAMSPQQLEKAIQKLESKMYQHAKDLEFEQAAQVRDEIDNLRKQFIVNS</sequence>
<protein>
    <recommendedName>
        <fullName evidence="1">UvrABC system protein B</fullName>
        <shortName evidence="1">Protein UvrB</shortName>
    </recommendedName>
    <alternativeName>
        <fullName evidence="1">Excinuclease ABC subunit B</fullName>
    </alternativeName>
</protein>
<feature type="chain" id="PRO_0000227381" description="UvrABC system protein B">
    <location>
        <begin position="1"/>
        <end position="676"/>
    </location>
</feature>
<feature type="domain" description="Helicase ATP-binding" evidence="1">
    <location>
        <begin position="26"/>
        <end position="414"/>
    </location>
</feature>
<feature type="domain" description="Helicase C-terminal" evidence="1">
    <location>
        <begin position="432"/>
        <end position="598"/>
    </location>
</feature>
<feature type="domain" description="UVR" evidence="1">
    <location>
        <begin position="636"/>
        <end position="671"/>
    </location>
</feature>
<feature type="short sequence motif" description="Beta-hairpin">
    <location>
        <begin position="92"/>
        <end position="115"/>
    </location>
</feature>
<feature type="binding site" evidence="1">
    <location>
        <begin position="39"/>
        <end position="46"/>
    </location>
    <ligand>
        <name>ATP</name>
        <dbReference type="ChEBI" id="CHEBI:30616"/>
    </ligand>
</feature>
<evidence type="ECO:0000255" key="1">
    <source>
        <dbReference type="HAMAP-Rule" id="MF_00204"/>
    </source>
</evidence>
<proteinExistence type="inferred from homology"/>
<organism>
    <name type="scientific">Aliivibrio fischeri (strain ATCC 700601 / ES114)</name>
    <name type="common">Vibrio fischeri</name>
    <dbReference type="NCBI Taxonomy" id="312309"/>
    <lineage>
        <taxon>Bacteria</taxon>
        <taxon>Pseudomonadati</taxon>
        <taxon>Pseudomonadota</taxon>
        <taxon>Gammaproteobacteria</taxon>
        <taxon>Vibrionales</taxon>
        <taxon>Vibrionaceae</taxon>
        <taxon>Aliivibrio</taxon>
    </lineage>
</organism>
<comment type="function">
    <text evidence="1">The UvrABC repair system catalyzes the recognition and processing of DNA lesions. A damage recognition complex composed of 2 UvrA and 2 UvrB subunits scans DNA for abnormalities. Upon binding of the UvrA(2)B(2) complex to a putative damaged site, the DNA wraps around one UvrB monomer. DNA wrap is dependent on ATP binding by UvrB and probably causes local melting of the DNA helix, facilitating insertion of UvrB beta-hairpin between the DNA strands. Then UvrB probes one DNA strand for the presence of a lesion. If a lesion is found the UvrA subunits dissociate and the UvrB-DNA preincision complex is formed. This complex is subsequently bound by UvrC and the second UvrB is released. If no lesion is found, the DNA wraps around the other UvrB subunit that will check the other stand for damage.</text>
</comment>
<comment type="subunit">
    <text evidence="1">Forms a heterotetramer with UvrA during the search for lesions. Interacts with UvrC in an incision complex.</text>
</comment>
<comment type="subcellular location">
    <subcellularLocation>
        <location evidence="1">Cytoplasm</location>
    </subcellularLocation>
</comment>
<comment type="domain">
    <text evidence="1">The beta-hairpin motif is involved in DNA binding.</text>
</comment>
<comment type="similarity">
    <text evidence="1">Belongs to the UvrB family.</text>
</comment>
<dbReference type="EMBL" id="CP000020">
    <property type="protein sequence ID" value="AAW85431.1"/>
    <property type="molecule type" value="Genomic_DNA"/>
</dbReference>
<dbReference type="RefSeq" id="WP_011261588.1">
    <property type="nucleotide sequence ID" value="NC_006840.2"/>
</dbReference>
<dbReference type="RefSeq" id="YP_204319.1">
    <property type="nucleotide sequence ID" value="NC_006840.2"/>
</dbReference>
<dbReference type="SMR" id="Q5E6B5"/>
<dbReference type="STRING" id="312309.VF_0936"/>
<dbReference type="EnsemblBacteria" id="AAW85431">
    <property type="protein sequence ID" value="AAW85431"/>
    <property type="gene ID" value="VF_0936"/>
</dbReference>
<dbReference type="GeneID" id="54163606"/>
<dbReference type="KEGG" id="vfi:VF_0936"/>
<dbReference type="PATRIC" id="fig|312309.11.peg.934"/>
<dbReference type="eggNOG" id="COG0556">
    <property type="taxonomic scope" value="Bacteria"/>
</dbReference>
<dbReference type="HOGENOM" id="CLU_009621_2_1_6"/>
<dbReference type="OrthoDB" id="9806651at2"/>
<dbReference type="Proteomes" id="UP000000537">
    <property type="component" value="Chromosome I"/>
</dbReference>
<dbReference type="GO" id="GO:0005737">
    <property type="term" value="C:cytoplasm"/>
    <property type="evidence" value="ECO:0007669"/>
    <property type="project" value="UniProtKB-SubCell"/>
</dbReference>
<dbReference type="GO" id="GO:0009380">
    <property type="term" value="C:excinuclease repair complex"/>
    <property type="evidence" value="ECO:0007669"/>
    <property type="project" value="InterPro"/>
</dbReference>
<dbReference type="GO" id="GO:0005524">
    <property type="term" value="F:ATP binding"/>
    <property type="evidence" value="ECO:0007669"/>
    <property type="project" value="UniProtKB-UniRule"/>
</dbReference>
<dbReference type="GO" id="GO:0016887">
    <property type="term" value="F:ATP hydrolysis activity"/>
    <property type="evidence" value="ECO:0007669"/>
    <property type="project" value="InterPro"/>
</dbReference>
<dbReference type="GO" id="GO:0003677">
    <property type="term" value="F:DNA binding"/>
    <property type="evidence" value="ECO:0007669"/>
    <property type="project" value="UniProtKB-UniRule"/>
</dbReference>
<dbReference type="GO" id="GO:0009381">
    <property type="term" value="F:excinuclease ABC activity"/>
    <property type="evidence" value="ECO:0007669"/>
    <property type="project" value="UniProtKB-UniRule"/>
</dbReference>
<dbReference type="GO" id="GO:0006289">
    <property type="term" value="P:nucleotide-excision repair"/>
    <property type="evidence" value="ECO:0007669"/>
    <property type="project" value="UniProtKB-UniRule"/>
</dbReference>
<dbReference type="GO" id="GO:0009432">
    <property type="term" value="P:SOS response"/>
    <property type="evidence" value="ECO:0007669"/>
    <property type="project" value="UniProtKB-UniRule"/>
</dbReference>
<dbReference type="CDD" id="cd17916">
    <property type="entry name" value="DEXHc_UvrB"/>
    <property type="match status" value="1"/>
</dbReference>
<dbReference type="CDD" id="cd18790">
    <property type="entry name" value="SF2_C_UvrB"/>
    <property type="match status" value="1"/>
</dbReference>
<dbReference type="FunFam" id="3.40.50.300:FF:000257">
    <property type="entry name" value="UvrABC system protein B"/>
    <property type="match status" value="1"/>
</dbReference>
<dbReference type="FunFam" id="3.40.50.300:FF:000477">
    <property type="entry name" value="UvrABC system protein B"/>
    <property type="match status" value="1"/>
</dbReference>
<dbReference type="Gene3D" id="3.40.50.300">
    <property type="entry name" value="P-loop containing nucleotide triphosphate hydrolases"/>
    <property type="match status" value="3"/>
</dbReference>
<dbReference type="Gene3D" id="4.10.860.10">
    <property type="entry name" value="UVR domain"/>
    <property type="match status" value="1"/>
</dbReference>
<dbReference type="HAMAP" id="MF_00204">
    <property type="entry name" value="UvrB"/>
    <property type="match status" value="1"/>
</dbReference>
<dbReference type="InterPro" id="IPR006935">
    <property type="entry name" value="Helicase/UvrB_N"/>
</dbReference>
<dbReference type="InterPro" id="IPR014001">
    <property type="entry name" value="Helicase_ATP-bd"/>
</dbReference>
<dbReference type="InterPro" id="IPR001650">
    <property type="entry name" value="Helicase_C-like"/>
</dbReference>
<dbReference type="InterPro" id="IPR027417">
    <property type="entry name" value="P-loop_NTPase"/>
</dbReference>
<dbReference type="InterPro" id="IPR001943">
    <property type="entry name" value="UVR_dom"/>
</dbReference>
<dbReference type="InterPro" id="IPR036876">
    <property type="entry name" value="UVR_dom_sf"/>
</dbReference>
<dbReference type="InterPro" id="IPR004807">
    <property type="entry name" value="UvrB"/>
</dbReference>
<dbReference type="InterPro" id="IPR041471">
    <property type="entry name" value="UvrB_inter"/>
</dbReference>
<dbReference type="InterPro" id="IPR024759">
    <property type="entry name" value="UvrB_YAD/RRR_dom"/>
</dbReference>
<dbReference type="NCBIfam" id="NF003673">
    <property type="entry name" value="PRK05298.1"/>
    <property type="match status" value="1"/>
</dbReference>
<dbReference type="NCBIfam" id="TIGR00631">
    <property type="entry name" value="uvrb"/>
    <property type="match status" value="1"/>
</dbReference>
<dbReference type="PANTHER" id="PTHR24029">
    <property type="entry name" value="UVRABC SYSTEM PROTEIN B"/>
    <property type="match status" value="1"/>
</dbReference>
<dbReference type="PANTHER" id="PTHR24029:SF0">
    <property type="entry name" value="UVRABC SYSTEM PROTEIN B"/>
    <property type="match status" value="1"/>
</dbReference>
<dbReference type="Pfam" id="PF00271">
    <property type="entry name" value="Helicase_C"/>
    <property type="match status" value="1"/>
</dbReference>
<dbReference type="Pfam" id="PF04851">
    <property type="entry name" value="ResIII"/>
    <property type="match status" value="1"/>
</dbReference>
<dbReference type="Pfam" id="PF02151">
    <property type="entry name" value="UVR"/>
    <property type="match status" value="1"/>
</dbReference>
<dbReference type="Pfam" id="PF12344">
    <property type="entry name" value="UvrB"/>
    <property type="match status" value="1"/>
</dbReference>
<dbReference type="Pfam" id="PF17757">
    <property type="entry name" value="UvrB_inter"/>
    <property type="match status" value="1"/>
</dbReference>
<dbReference type="SMART" id="SM00487">
    <property type="entry name" value="DEXDc"/>
    <property type="match status" value="1"/>
</dbReference>
<dbReference type="SMART" id="SM00490">
    <property type="entry name" value="HELICc"/>
    <property type="match status" value="1"/>
</dbReference>
<dbReference type="SUPFAM" id="SSF46600">
    <property type="entry name" value="C-terminal UvrC-binding domain of UvrB"/>
    <property type="match status" value="1"/>
</dbReference>
<dbReference type="SUPFAM" id="SSF52540">
    <property type="entry name" value="P-loop containing nucleoside triphosphate hydrolases"/>
    <property type="match status" value="2"/>
</dbReference>
<dbReference type="PROSITE" id="PS51192">
    <property type="entry name" value="HELICASE_ATP_BIND_1"/>
    <property type="match status" value="1"/>
</dbReference>
<dbReference type="PROSITE" id="PS51194">
    <property type="entry name" value="HELICASE_CTER"/>
    <property type="match status" value="1"/>
</dbReference>
<dbReference type="PROSITE" id="PS50151">
    <property type="entry name" value="UVR"/>
    <property type="match status" value="1"/>
</dbReference>
<reference key="1">
    <citation type="journal article" date="2005" name="Proc. Natl. Acad. Sci. U.S.A.">
        <title>Complete genome sequence of Vibrio fischeri: a symbiotic bacterium with pathogenic congeners.</title>
        <authorList>
            <person name="Ruby E.G."/>
            <person name="Urbanowski M."/>
            <person name="Campbell J."/>
            <person name="Dunn A."/>
            <person name="Faini M."/>
            <person name="Gunsalus R."/>
            <person name="Lostroh P."/>
            <person name="Lupp C."/>
            <person name="McCann J."/>
            <person name="Millikan D."/>
            <person name="Schaefer A."/>
            <person name="Stabb E."/>
            <person name="Stevens A."/>
            <person name="Visick K."/>
            <person name="Whistler C."/>
            <person name="Greenberg E.P."/>
        </authorList>
    </citation>
    <scope>NUCLEOTIDE SEQUENCE [LARGE SCALE GENOMIC DNA]</scope>
    <source>
        <strain>ATCC 700601 / ES114</strain>
    </source>
</reference>
<gene>
    <name evidence="1" type="primary">uvrB</name>
    <name type="ordered locus">VF_0936</name>
</gene>
<accession>Q5E6B5</accession>
<name>UVRB_ALIF1</name>
<keyword id="KW-0067">ATP-binding</keyword>
<keyword id="KW-0963">Cytoplasm</keyword>
<keyword id="KW-0227">DNA damage</keyword>
<keyword id="KW-0228">DNA excision</keyword>
<keyword id="KW-0234">DNA repair</keyword>
<keyword id="KW-0267">Excision nuclease</keyword>
<keyword id="KW-0547">Nucleotide-binding</keyword>
<keyword id="KW-1185">Reference proteome</keyword>
<keyword id="KW-0742">SOS response</keyword>